<keyword id="KW-0963">Cytoplasm</keyword>
<keyword id="KW-0418">Kinase</keyword>
<keyword id="KW-0808">Transferase</keyword>
<protein>
    <recommendedName>
        <fullName evidence="1">Autoinducer-2 kinase</fullName>
        <shortName evidence="1">AI-2 kinase</shortName>
        <ecNumber evidence="1">2.7.1.189</ecNumber>
    </recommendedName>
</protein>
<reference key="1">
    <citation type="submission" date="2007-11" db="EMBL/GenBank/DDBJ databases">
        <authorList>
            <consortium name="The Salmonella enterica serovar Paratyphi B Genome Sequencing Project"/>
            <person name="McClelland M."/>
            <person name="Sanderson E.K."/>
            <person name="Porwollik S."/>
            <person name="Spieth J."/>
            <person name="Clifton W.S."/>
            <person name="Fulton R."/>
            <person name="Cordes M."/>
            <person name="Wollam A."/>
            <person name="Shah N."/>
            <person name="Pepin K."/>
            <person name="Bhonagiri V."/>
            <person name="Nash W."/>
            <person name="Johnson M."/>
            <person name="Thiruvilangam P."/>
            <person name="Wilson R."/>
        </authorList>
    </citation>
    <scope>NUCLEOTIDE SEQUENCE [LARGE SCALE GENOMIC DNA]</scope>
    <source>
        <strain>ATCC BAA-1250 / SPB7</strain>
    </source>
</reference>
<dbReference type="EC" id="2.7.1.189" evidence="1"/>
<dbReference type="EMBL" id="CP000886">
    <property type="protein sequence ID" value="ABX70336.1"/>
    <property type="molecule type" value="Genomic_DNA"/>
</dbReference>
<dbReference type="RefSeq" id="WP_000113086.1">
    <property type="nucleotide sequence ID" value="NC_010102.1"/>
</dbReference>
<dbReference type="SMR" id="A9MZF8"/>
<dbReference type="KEGG" id="spq:SPAB_05045"/>
<dbReference type="PATRIC" id="fig|1016998.12.peg.4736"/>
<dbReference type="HOGENOM" id="CLU_009281_3_4_6"/>
<dbReference type="BioCyc" id="SENT1016998:SPAB_RS20530-MONOMER"/>
<dbReference type="Proteomes" id="UP000008556">
    <property type="component" value="Chromosome"/>
</dbReference>
<dbReference type="GO" id="GO:0005737">
    <property type="term" value="C:cytoplasm"/>
    <property type="evidence" value="ECO:0007669"/>
    <property type="project" value="UniProtKB-SubCell"/>
</dbReference>
<dbReference type="GO" id="GO:0071518">
    <property type="term" value="F:autoinducer-2 kinase activity"/>
    <property type="evidence" value="ECO:0007669"/>
    <property type="project" value="UniProtKB-UniRule"/>
</dbReference>
<dbReference type="GO" id="GO:0005975">
    <property type="term" value="P:carbohydrate metabolic process"/>
    <property type="evidence" value="ECO:0007669"/>
    <property type="project" value="InterPro"/>
</dbReference>
<dbReference type="GO" id="GO:0009372">
    <property type="term" value="P:quorum sensing"/>
    <property type="evidence" value="ECO:0007669"/>
    <property type="project" value="InterPro"/>
</dbReference>
<dbReference type="CDD" id="cd07775">
    <property type="entry name" value="ASKHA_NBD_FGGY_AI-2K"/>
    <property type="match status" value="1"/>
</dbReference>
<dbReference type="Gene3D" id="3.30.420.40">
    <property type="match status" value="2"/>
</dbReference>
<dbReference type="HAMAP" id="MF_02053">
    <property type="entry name" value="LsrK"/>
    <property type="match status" value="1"/>
</dbReference>
<dbReference type="InterPro" id="IPR033676">
    <property type="entry name" value="AI-2_kinase"/>
</dbReference>
<dbReference type="InterPro" id="IPR043129">
    <property type="entry name" value="ATPase_NBD"/>
</dbReference>
<dbReference type="InterPro" id="IPR000577">
    <property type="entry name" value="Carb_kinase_FGGY"/>
</dbReference>
<dbReference type="InterPro" id="IPR018485">
    <property type="entry name" value="FGGY_C"/>
</dbReference>
<dbReference type="InterPro" id="IPR050406">
    <property type="entry name" value="FGGY_Carb_Kinase"/>
</dbReference>
<dbReference type="InterPro" id="IPR018484">
    <property type="entry name" value="FGGY_N"/>
</dbReference>
<dbReference type="NCBIfam" id="NF008187">
    <property type="entry name" value="PRK10939.1"/>
    <property type="match status" value="1"/>
</dbReference>
<dbReference type="PANTHER" id="PTHR43095:SF1">
    <property type="entry name" value="AUTOINDUCER-2 KINASE"/>
    <property type="match status" value="1"/>
</dbReference>
<dbReference type="PANTHER" id="PTHR43095">
    <property type="entry name" value="SUGAR KINASE"/>
    <property type="match status" value="1"/>
</dbReference>
<dbReference type="Pfam" id="PF02782">
    <property type="entry name" value="FGGY_C"/>
    <property type="match status" value="1"/>
</dbReference>
<dbReference type="Pfam" id="PF00370">
    <property type="entry name" value="FGGY_N"/>
    <property type="match status" value="1"/>
</dbReference>
<dbReference type="PIRSF" id="PIRSF000538">
    <property type="entry name" value="GlpK"/>
    <property type="match status" value="1"/>
</dbReference>
<dbReference type="SUPFAM" id="SSF53067">
    <property type="entry name" value="Actin-like ATPase domain"/>
    <property type="match status" value="2"/>
</dbReference>
<name>LSRK_SALPB</name>
<proteinExistence type="inferred from homology"/>
<evidence type="ECO:0000255" key="1">
    <source>
        <dbReference type="HAMAP-Rule" id="MF_02053"/>
    </source>
</evidence>
<gene>
    <name evidence="1" type="primary">lsrK</name>
    <name type="ordered locus">SPAB_05045</name>
</gene>
<sequence length="530" mass="57404">MARLCTHTESGHYLMALDAGTGSVRAVIFDLQGKQIAVGQAEWQHLAVPDVPGSMEFDLAKNWQLACQCIRQALQKAAIPATAIAAVSACSMREGIVIYDSNGEPIWACANVDARAAHEVSELKELHDNTFEEEVYRCSGQTLALSAIPRLLWLAHHRPDIYHRASTVTMISDWMAFMLSGELAVDPSNAGTTGLLDLVTRNWKRSLLQMAGLRSDILSPVKETGTLLGHISQKAAEQCDLQAGTPVIVGGGDVQLGCLGLGVVRPAQTAVLGGTFWQQVVNLPAPVTDPNMNVRINPHVIPGMVQTESISFFTGLTMRWFRDAFCAEEKLIAERLGIDAYSLLEDMASRVPPGAYGVMPIFSDVMRFKRWYHAAPSFINLSIDPEKCNKATLFRALEENAAIVSACNLQQIAAFSGVQADSLVFAGGGSKGKLWSQILADVTGLTVHVPVVKEATALGCAIAAGVGVGVWSSLAETGEKLVRWDREHKPNPENFAVYQQAREKWQAVYQDQRALVDGGLTTSLWKAPGL</sequence>
<feature type="chain" id="PRO_0000351597" description="Autoinducer-2 kinase">
    <location>
        <begin position="1"/>
        <end position="530"/>
    </location>
</feature>
<accession>A9MZF8</accession>
<comment type="function">
    <text evidence="1">Catalyzes the phosphorylation of autoinducer-2 (AI-2) to phospho-AI-2, which subsequently inactivates the transcriptional regulator LsrR and leads to the transcription of the lsr operon. Phosphorylates the ring-open form of (S)-4,5-dihydroxypentane-2,3-dione (DPD), which is the precursor to all AI-2 signaling molecules, at the C5 position.</text>
</comment>
<comment type="catalytic activity">
    <reaction evidence="1">
        <text>(S)-4,5-dihydroxypentane-2,3-dione + ATP = (2S)-2-hydroxy-3,4-dioxopentyl phosphate + ADP + H(+)</text>
        <dbReference type="Rhea" id="RHEA:15377"/>
        <dbReference type="ChEBI" id="CHEBI:15378"/>
        <dbReference type="ChEBI" id="CHEBI:29484"/>
        <dbReference type="ChEBI" id="CHEBI:30616"/>
        <dbReference type="ChEBI" id="CHEBI:71677"/>
        <dbReference type="ChEBI" id="CHEBI:456216"/>
        <dbReference type="EC" id="2.7.1.189"/>
    </reaction>
</comment>
<comment type="subcellular location">
    <subcellularLocation>
        <location evidence="1">Cytoplasm</location>
    </subcellularLocation>
</comment>
<comment type="similarity">
    <text evidence="1">Belongs to the FGGY kinase family.</text>
</comment>
<organism>
    <name type="scientific">Salmonella paratyphi B (strain ATCC BAA-1250 / SPB7)</name>
    <dbReference type="NCBI Taxonomy" id="1016998"/>
    <lineage>
        <taxon>Bacteria</taxon>
        <taxon>Pseudomonadati</taxon>
        <taxon>Pseudomonadota</taxon>
        <taxon>Gammaproteobacteria</taxon>
        <taxon>Enterobacterales</taxon>
        <taxon>Enterobacteriaceae</taxon>
        <taxon>Salmonella</taxon>
    </lineage>
</organism>